<keyword id="KW-0067">ATP-binding</keyword>
<keyword id="KW-0143">Chaperone</keyword>
<keyword id="KW-0963">Cytoplasm</keyword>
<keyword id="KW-0547">Nucleotide-binding</keyword>
<keyword id="KW-1185">Reference proteome</keyword>
<keyword id="KW-0346">Stress response</keyword>
<protein>
    <recommendedName>
        <fullName evidence="1">ATP-dependent protease ATPase subunit HslU</fullName>
    </recommendedName>
    <alternativeName>
        <fullName evidence="1">Unfoldase HslU</fullName>
    </alternativeName>
</protein>
<accession>Q16CY2</accession>
<dbReference type="EMBL" id="CP000362">
    <property type="protein sequence ID" value="ABG30161.1"/>
    <property type="molecule type" value="Genomic_DNA"/>
</dbReference>
<dbReference type="RefSeq" id="WP_011566783.1">
    <property type="nucleotide sequence ID" value="NC_008209.1"/>
</dbReference>
<dbReference type="SMR" id="Q16CY2"/>
<dbReference type="STRING" id="375451.RD1_0448"/>
<dbReference type="KEGG" id="rde:RD1_0448"/>
<dbReference type="eggNOG" id="COG1220">
    <property type="taxonomic scope" value="Bacteria"/>
</dbReference>
<dbReference type="HOGENOM" id="CLU_033123_0_0_5"/>
<dbReference type="OrthoDB" id="9804062at2"/>
<dbReference type="Proteomes" id="UP000007029">
    <property type="component" value="Chromosome"/>
</dbReference>
<dbReference type="GO" id="GO:0009376">
    <property type="term" value="C:HslUV protease complex"/>
    <property type="evidence" value="ECO:0007669"/>
    <property type="project" value="UniProtKB-UniRule"/>
</dbReference>
<dbReference type="GO" id="GO:0005524">
    <property type="term" value="F:ATP binding"/>
    <property type="evidence" value="ECO:0007669"/>
    <property type="project" value="UniProtKB-UniRule"/>
</dbReference>
<dbReference type="GO" id="GO:0016887">
    <property type="term" value="F:ATP hydrolysis activity"/>
    <property type="evidence" value="ECO:0007669"/>
    <property type="project" value="InterPro"/>
</dbReference>
<dbReference type="GO" id="GO:0008233">
    <property type="term" value="F:peptidase activity"/>
    <property type="evidence" value="ECO:0007669"/>
    <property type="project" value="InterPro"/>
</dbReference>
<dbReference type="GO" id="GO:0036402">
    <property type="term" value="F:proteasome-activating activity"/>
    <property type="evidence" value="ECO:0007669"/>
    <property type="project" value="UniProtKB-UniRule"/>
</dbReference>
<dbReference type="GO" id="GO:0043335">
    <property type="term" value="P:protein unfolding"/>
    <property type="evidence" value="ECO:0007669"/>
    <property type="project" value="UniProtKB-UniRule"/>
</dbReference>
<dbReference type="GO" id="GO:0051603">
    <property type="term" value="P:proteolysis involved in protein catabolic process"/>
    <property type="evidence" value="ECO:0007669"/>
    <property type="project" value="TreeGrafter"/>
</dbReference>
<dbReference type="CDD" id="cd19498">
    <property type="entry name" value="RecA-like_HslU"/>
    <property type="match status" value="1"/>
</dbReference>
<dbReference type="FunFam" id="3.40.50.300:FF:000213">
    <property type="entry name" value="ATP-dependent protease ATPase subunit HslU"/>
    <property type="match status" value="1"/>
</dbReference>
<dbReference type="FunFam" id="3.40.50.300:FF:000220">
    <property type="entry name" value="ATP-dependent protease ATPase subunit HslU"/>
    <property type="match status" value="1"/>
</dbReference>
<dbReference type="Gene3D" id="1.10.8.60">
    <property type="match status" value="1"/>
</dbReference>
<dbReference type="Gene3D" id="3.40.50.300">
    <property type="entry name" value="P-loop containing nucleotide triphosphate hydrolases"/>
    <property type="match status" value="2"/>
</dbReference>
<dbReference type="HAMAP" id="MF_00249">
    <property type="entry name" value="HslU"/>
    <property type="match status" value="1"/>
</dbReference>
<dbReference type="InterPro" id="IPR003593">
    <property type="entry name" value="AAA+_ATPase"/>
</dbReference>
<dbReference type="InterPro" id="IPR050052">
    <property type="entry name" value="ATP-dep_Clp_protease_ClpX"/>
</dbReference>
<dbReference type="InterPro" id="IPR003959">
    <property type="entry name" value="ATPase_AAA_core"/>
</dbReference>
<dbReference type="InterPro" id="IPR019489">
    <property type="entry name" value="Clp_ATPase_C"/>
</dbReference>
<dbReference type="InterPro" id="IPR004491">
    <property type="entry name" value="HslU"/>
</dbReference>
<dbReference type="InterPro" id="IPR027417">
    <property type="entry name" value="P-loop_NTPase"/>
</dbReference>
<dbReference type="NCBIfam" id="TIGR00390">
    <property type="entry name" value="hslU"/>
    <property type="match status" value="1"/>
</dbReference>
<dbReference type="NCBIfam" id="NF003544">
    <property type="entry name" value="PRK05201.1"/>
    <property type="match status" value="1"/>
</dbReference>
<dbReference type="PANTHER" id="PTHR48102">
    <property type="entry name" value="ATP-DEPENDENT CLP PROTEASE ATP-BINDING SUBUNIT CLPX-LIKE, MITOCHONDRIAL-RELATED"/>
    <property type="match status" value="1"/>
</dbReference>
<dbReference type="PANTHER" id="PTHR48102:SF3">
    <property type="entry name" value="ATP-DEPENDENT PROTEASE ATPASE SUBUNIT HSLU"/>
    <property type="match status" value="1"/>
</dbReference>
<dbReference type="Pfam" id="PF00004">
    <property type="entry name" value="AAA"/>
    <property type="match status" value="1"/>
</dbReference>
<dbReference type="Pfam" id="PF07724">
    <property type="entry name" value="AAA_2"/>
    <property type="match status" value="1"/>
</dbReference>
<dbReference type="SMART" id="SM00382">
    <property type="entry name" value="AAA"/>
    <property type="match status" value="1"/>
</dbReference>
<dbReference type="SMART" id="SM01086">
    <property type="entry name" value="ClpB_D2-small"/>
    <property type="match status" value="1"/>
</dbReference>
<dbReference type="SUPFAM" id="SSF52540">
    <property type="entry name" value="P-loop containing nucleoside triphosphate hydrolases"/>
    <property type="match status" value="1"/>
</dbReference>
<organism>
    <name type="scientific">Roseobacter denitrificans (strain ATCC 33942 / OCh 114)</name>
    <name type="common">Erythrobacter sp. (strain OCh 114)</name>
    <name type="synonym">Roseobacter denitrificans</name>
    <dbReference type="NCBI Taxonomy" id="375451"/>
    <lineage>
        <taxon>Bacteria</taxon>
        <taxon>Pseudomonadati</taxon>
        <taxon>Pseudomonadota</taxon>
        <taxon>Alphaproteobacteria</taxon>
        <taxon>Rhodobacterales</taxon>
        <taxon>Roseobacteraceae</taxon>
        <taxon>Roseobacter</taxon>
    </lineage>
</organism>
<reference key="1">
    <citation type="journal article" date="2007" name="J. Bacteriol.">
        <title>The complete genome sequence of Roseobacter denitrificans reveals a mixotrophic rather than photosynthetic metabolism.</title>
        <authorList>
            <person name="Swingley W.D."/>
            <person name="Sadekar S."/>
            <person name="Mastrian S.D."/>
            <person name="Matthies H.J."/>
            <person name="Hao J."/>
            <person name="Ramos H."/>
            <person name="Acharya C.R."/>
            <person name="Conrad A.L."/>
            <person name="Taylor H.L."/>
            <person name="Dejesa L.C."/>
            <person name="Shah M.K."/>
            <person name="O'Huallachain M.E."/>
            <person name="Lince M.T."/>
            <person name="Blankenship R.E."/>
            <person name="Beatty J.T."/>
            <person name="Touchman J.W."/>
        </authorList>
    </citation>
    <scope>NUCLEOTIDE SEQUENCE [LARGE SCALE GENOMIC DNA]</scope>
    <source>
        <strain>ATCC 33942 / OCh 114</strain>
    </source>
</reference>
<gene>
    <name evidence="1" type="primary">hslU</name>
    <name type="ordered locus">RD1_0448</name>
</gene>
<evidence type="ECO:0000255" key="1">
    <source>
        <dbReference type="HAMAP-Rule" id="MF_00249"/>
    </source>
</evidence>
<name>HSLU_ROSDO</name>
<comment type="function">
    <text evidence="1">ATPase subunit of a proteasome-like degradation complex; this subunit has chaperone activity. The binding of ATP and its subsequent hydrolysis by HslU are essential for unfolding of protein substrates subsequently hydrolyzed by HslV. HslU recognizes the N-terminal part of its protein substrates and unfolds these before they are guided to HslV for hydrolysis.</text>
</comment>
<comment type="subunit">
    <text evidence="1">A double ring-shaped homohexamer of HslV is capped on each side by a ring-shaped HslU homohexamer. The assembly of the HslU/HslV complex is dependent on binding of ATP.</text>
</comment>
<comment type="subcellular location">
    <subcellularLocation>
        <location evidence="1">Cytoplasm</location>
    </subcellularLocation>
</comment>
<comment type="similarity">
    <text evidence="1">Belongs to the ClpX chaperone family. HslU subfamily.</text>
</comment>
<proteinExistence type="inferred from homology"/>
<sequence>MTDLTPREIVSELDRFIIGQNDAKRAVAVALRNRWRRKQLADDLRDEVYPKNILMIGPTGVGKTEISRRLAKLARAPFLKVEATKFTEVGYVGRDVEQIIRDLVDNAISMTRDHMRDDVKANAHQAAEERVITAIAGEDARESTREMFRKKLKAGDLDDTVIELDVADTSSPFPMMDIPGQPGGNMGMMNLGDIFGKALGGRTTRKKMTVSQSYDILIGEEADKLLDDETVNRAAIEAVEQNGIVFLDEIDKVCAKSDTRGGDVSREGVQRDLLPLIEGTTVSTKHGPIKTDHILFIASGAFHIAKPSDLLPELQGRLPIRVELRALTEEDFVRILTETDNALTLQYTALMGTEEVTVSFTEDGIAALAKIAAEVNQSVENIGARRLYTVMERVFEELSFSAPDRAGEEIIVDAAFVDENLGALAKSTDVSRYVL</sequence>
<feature type="chain" id="PRO_1000012797" description="ATP-dependent protease ATPase subunit HslU">
    <location>
        <begin position="1"/>
        <end position="435"/>
    </location>
</feature>
<feature type="binding site" evidence="1">
    <location>
        <position position="18"/>
    </location>
    <ligand>
        <name>ATP</name>
        <dbReference type="ChEBI" id="CHEBI:30616"/>
    </ligand>
</feature>
<feature type="binding site" evidence="1">
    <location>
        <begin position="60"/>
        <end position="65"/>
    </location>
    <ligand>
        <name>ATP</name>
        <dbReference type="ChEBI" id="CHEBI:30616"/>
    </ligand>
</feature>
<feature type="binding site" evidence="1">
    <location>
        <position position="248"/>
    </location>
    <ligand>
        <name>ATP</name>
        <dbReference type="ChEBI" id="CHEBI:30616"/>
    </ligand>
</feature>
<feature type="binding site" evidence="1">
    <location>
        <position position="313"/>
    </location>
    <ligand>
        <name>ATP</name>
        <dbReference type="ChEBI" id="CHEBI:30616"/>
    </ligand>
</feature>
<feature type="binding site" evidence="1">
    <location>
        <position position="385"/>
    </location>
    <ligand>
        <name>ATP</name>
        <dbReference type="ChEBI" id="CHEBI:30616"/>
    </ligand>
</feature>